<sequence>MKVTGIFLLSALALLSLSGNTGADSLGREAKCYNELNGCTKIYDPVCGTDGNTYPNECVLCFENRKRQTSILIQKSGPC</sequence>
<protein>
    <recommendedName>
        <fullName evidence="14">Serine protease inhibitor Kazal-type 1</fullName>
    </recommendedName>
    <alternativeName>
        <fullName evidence="12">Pancreatic secretory trypsin inhibitor</fullName>
    </alternativeName>
    <alternativeName>
        <fullName>Tumor-associated trypsin inhibitor</fullName>
        <shortName>TATI</shortName>
    </alternativeName>
</protein>
<dbReference type="EMBL" id="M20530">
    <property type="protein sequence ID" value="AAA36522.1"/>
    <property type="molecule type" value="Genomic_DNA"/>
</dbReference>
<dbReference type="EMBL" id="M22971">
    <property type="protein sequence ID" value="AAA36522.1"/>
    <property type="status" value="JOINED"/>
    <property type="molecule type" value="Genomic_DNA"/>
</dbReference>
<dbReference type="EMBL" id="M20528">
    <property type="protein sequence ID" value="AAA36522.1"/>
    <property type="status" value="JOINED"/>
    <property type="molecule type" value="Genomic_DNA"/>
</dbReference>
<dbReference type="EMBL" id="M20529">
    <property type="protein sequence ID" value="AAA36522.1"/>
    <property type="status" value="JOINED"/>
    <property type="molecule type" value="Genomic_DNA"/>
</dbReference>
<dbReference type="EMBL" id="Y00705">
    <property type="protein sequence ID" value="CAA68697.1"/>
    <property type="molecule type" value="mRNA"/>
</dbReference>
<dbReference type="EMBL" id="M11949">
    <property type="protein sequence ID" value="AAA36521.1"/>
    <property type="molecule type" value="mRNA"/>
</dbReference>
<dbReference type="EMBL" id="AF286028">
    <property type="protein sequence ID" value="AAG00531.1"/>
    <property type="molecule type" value="Genomic_DNA"/>
</dbReference>
<dbReference type="EMBL" id="BC025790">
    <property type="protein sequence ID" value="AAH25790.1"/>
    <property type="molecule type" value="mRNA"/>
</dbReference>
<dbReference type="CCDS" id="CCDS4286.1"/>
<dbReference type="PIR" id="A27484">
    <property type="entry name" value="TIHUA"/>
</dbReference>
<dbReference type="RefSeq" id="NP_001341895.1">
    <property type="nucleotide sequence ID" value="NM_001354966.2"/>
</dbReference>
<dbReference type="RefSeq" id="NP_001366539.1">
    <property type="nucleotide sequence ID" value="NM_001379610.1"/>
</dbReference>
<dbReference type="RefSeq" id="NP_003113.2">
    <property type="nucleotide sequence ID" value="NM_003122.4"/>
</dbReference>
<dbReference type="RefSeq" id="XP_047273581.1">
    <property type="nucleotide sequence ID" value="XM_047417625.1"/>
</dbReference>
<dbReference type="RefSeq" id="XP_047273582.1">
    <property type="nucleotide sequence ID" value="XM_047417626.1"/>
</dbReference>
<dbReference type="RefSeq" id="XP_054209284.1">
    <property type="nucleotide sequence ID" value="XM_054353309.1"/>
</dbReference>
<dbReference type="RefSeq" id="XP_054209285.1">
    <property type="nucleotide sequence ID" value="XM_054353310.1"/>
</dbReference>
<dbReference type="RefSeq" id="XP_054209286.1">
    <property type="nucleotide sequence ID" value="XM_054353311.1"/>
</dbReference>
<dbReference type="PDB" id="1CGI">
    <property type="method" value="X-ray"/>
    <property type="resolution" value="2.30 A"/>
    <property type="chains" value="I=24-79"/>
</dbReference>
<dbReference type="PDB" id="1CGJ">
    <property type="method" value="X-ray"/>
    <property type="resolution" value="2.30 A"/>
    <property type="chains" value="I=24-79"/>
</dbReference>
<dbReference type="PDB" id="1HPT">
    <property type="method" value="X-ray"/>
    <property type="resolution" value="2.30 A"/>
    <property type="chains" value="A=24-79"/>
</dbReference>
<dbReference type="PDB" id="7QE8">
    <property type="method" value="X-ray"/>
    <property type="resolution" value="2.90 A"/>
    <property type="chains" value="C/D=24-79"/>
</dbReference>
<dbReference type="PDB" id="7QE9">
    <property type="method" value="X-ray"/>
    <property type="resolution" value="2.10 A"/>
    <property type="chains" value="C/D=24-79"/>
</dbReference>
<dbReference type="PDBsum" id="1CGI"/>
<dbReference type="PDBsum" id="1CGJ"/>
<dbReference type="PDBsum" id="1HPT"/>
<dbReference type="PDBsum" id="7QE8"/>
<dbReference type="PDBsum" id="7QE9"/>
<dbReference type="SMR" id="P00995"/>
<dbReference type="BioGRID" id="112568">
    <property type="interactions" value="8"/>
</dbReference>
<dbReference type="FunCoup" id="P00995">
    <property type="interactions" value="44"/>
</dbReference>
<dbReference type="IntAct" id="P00995">
    <property type="interactions" value="5"/>
</dbReference>
<dbReference type="MINT" id="P00995"/>
<dbReference type="STRING" id="9606.ENSP00000296695"/>
<dbReference type="MEROPS" id="I01.011"/>
<dbReference type="iPTMnet" id="P00995"/>
<dbReference type="PhosphoSitePlus" id="P00995"/>
<dbReference type="BioMuta" id="SPINK1"/>
<dbReference type="DMDM" id="124856"/>
<dbReference type="jPOST" id="P00995"/>
<dbReference type="MassIVE" id="P00995"/>
<dbReference type="PaxDb" id="9606-ENSP00000296695"/>
<dbReference type="PeptideAtlas" id="P00995"/>
<dbReference type="ProteomicsDB" id="51298"/>
<dbReference type="Antibodypedia" id="27654">
    <property type="antibodies" value="272 antibodies from 32 providers"/>
</dbReference>
<dbReference type="DNASU" id="6690"/>
<dbReference type="Ensembl" id="ENST00000296695.10">
    <property type="protein sequence ID" value="ENSP00000296695.5"/>
    <property type="gene ID" value="ENSG00000164266.11"/>
</dbReference>
<dbReference type="GeneID" id="6690"/>
<dbReference type="KEGG" id="hsa:6690"/>
<dbReference type="MANE-Select" id="ENST00000296695.10">
    <property type="protein sequence ID" value="ENSP00000296695.5"/>
    <property type="RefSeq nucleotide sequence ID" value="NM_001379610.1"/>
    <property type="RefSeq protein sequence ID" value="NP_001366539.1"/>
</dbReference>
<dbReference type="UCSC" id="uc003los.3">
    <property type="organism name" value="human"/>
</dbReference>
<dbReference type="AGR" id="HGNC:11244"/>
<dbReference type="CTD" id="6690"/>
<dbReference type="DisGeNET" id="6690"/>
<dbReference type="GeneCards" id="SPINK1"/>
<dbReference type="GeneReviews" id="SPINK1"/>
<dbReference type="HGNC" id="HGNC:11244">
    <property type="gene designation" value="SPINK1"/>
</dbReference>
<dbReference type="HPA" id="ENSG00000164266">
    <property type="expression patterns" value="Tissue enriched (pancreas)"/>
</dbReference>
<dbReference type="MalaCards" id="SPINK1"/>
<dbReference type="MIM" id="167790">
    <property type="type" value="gene"/>
</dbReference>
<dbReference type="MIM" id="167800">
    <property type="type" value="phenotype"/>
</dbReference>
<dbReference type="MIM" id="608189">
    <property type="type" value="phenotype"/>
</dbReference>
<dbReference type="neXtProt" id="NX_P00995"/>
<dbReference type="OpenTargets" id="ENSG00000164266"/>
<dbReference type="Orphanet" id="676">
    <property type="disease" value="Hereditary chronic pancreatitis"/>
</dbReference>
<dbReference type="Orphanet" id="103918">
    <property type="disease" value="Tropical pancreatitis"/>
</dbReference>
<dbReference type="PharmGKB" id="PA36074"/>
<dbReference type="VEuPathDB" id="HostDB:ENSG00000164266"/>
<dbReference type="eggNOG" id="KOG3649">
    <property type="taxonomic scope" value="Eukaryota"/>
</dbReference>
<dbReference type="GeneTree" id="ENSGT00530000064228"/>
<dbReference type="InParanoid" id="P00995"/>
<dbReference type="OMA" id="REAKCNN"/>
<dbReference type="OrthoDB" id="126772at2759"/>
<dbReference type="PAN-GO" id="P00995">
    <property type="GO annotations" value="0 GO annotations based on evolutionary models"/>
</dbReference>
<dbReference type="PhylomeDB" id="P00995"/>
<dbReference type="PathwayCommons" id="P00995"/>
<dbReference type="Reactome" id="R-HSA-9925561">
    <property type="pathway name" value="Developmental Lineage of Pancreatic Acinar Cells"/>
</dbReference>
<dbReference type="SignaLink" id="P00995"/>
<dbReference type="BioGRID-ORCS" id="6690">
    <property type="hits" value="11 hits in 1143 CRISPR screens"/>
</dbReference>
<dbReference type="ChiTaRS" id="SPINK1">
    <property type="organism name" value="human"/>
</dbReference>
<dbReference type="EvolutionaryTrace" id="P00995"/>
<dbReference type="GeneWiki" id="SPINK1"/>
<dbReference type="GenomeRNAi" id="6690"/>
<dbReference type="Pharos" id="P00995">
    <property type="development level" value="Tbio"/>
</dbReference>
<dbReference type="PRO" id="PR:P00995"/>
<dbReference type="Proteomes" id="UP000005640">
    <property type="component" value="Chromosome 5"/>
</dbReference>
<dbReference type="RNAct" id="P00995">
    <property type="molecule type" value="protein"/>
</dbReference>
<dbReference type="Bgee" id="ENSG00000164266">
    <property type="expression patterns" value="Expressed in body of pancreas and 124 other cell types or tissues"/>
</dbReference>
<dbReference type="ExpressionAtlas" id="P00995">
    <property type="expression patterns" value="baseline and differential"/>
</dbReference>
<dbReference type="GO" id="GO:0070062">
    <property type="term" value="C:extracellular exosome"/>
    <property type="evidence" value="ECO:0007005"/>
    <property type="project" value="UniProtKB"/>
</dbReference>
<dbReference type="GO" id="GO:0004866">
    <property type="term" value="F:endopeptidase inhibitor activity"/>
    <property type="evidence" value="ECO:0000304"/>
    <property type="project" value="ProtInc"/>
</dbReference>
<dbReference type="GO" id="GO:0004867">
    <property type="term" value="F:serine-type endopeptidase inhibitor activity"/>
    <property type="evidence" value="ECO:0007669"/>
    <property type="project" value="UniProtKB-KW"/>
</dbReference>
<dbReference type="GO" id="GO:0090281">
    <property type="term" value="P:negative regulation of calcium ion import"/>
    <property type="evidence" value="ECO:0007669"/>
    <property type="project" value="Ensembl"/>
</dbReference>
<dbReference type="GO" id="GO:0010751">
    <property type="term" value="P:negative regulation of nitric oxide mediated signal transduction"/>
    <property type="evidence" value="ECO:0007669"/>
    <property type="project" value="Ensembl"/>
</dbReference>
<dbReference type="GO" id="GO:0007263">
    <property type="term" value="P:nitric oxide mediated signal transduction"/>
    <property type="evidence" value="ECO:0007669"/>
    <property type="project" value="Ensembl"/>
</dbReference>
<dbReference type="GO" id="GO:0060046">
    <property type="term" value="P:regulation of acrosome reaction"/>
    <property type="evidence" value="ECO:0007669"/>
    <property type="project" value="Ensembl"/>
</dbReference>
<dbReference type="GO" id="GO:2001256">
    <property type="term" value="P:regulation of store-operated calcium entry"/>
    <property type="evidence" value="ECO:0007669"/>
    <property type="project" value="Ensembl"/>
</dbReference>
<dbReference type="GO" id="GO:0048240">
    <property type="term" value="P:sperm capacitation"/>
    <property type="evidence" value="ECO:0007669"/>
    <property type="project" value="Ensembl"/>
</dbReference>
<dbReference type="CDD" id="cd01327">
    <property type="entry name" value="KAZAL_PSTI"/>
    <property type="match status" value="1"/>
</dbReference>
<dbReference type="FunFam" id="3.30.60.30:FF:000031">
    <property type="entry name" value="Serine protease inhibitor Kazal-type 2"/>
    <property type="match status" value="1"/>
</dbReference>
<dbReference type="Gene3D" id="3.30.60.30">
    <property type="match status" value="1"/>
</dbReference>
<dbReference type="InterPro" id="IPR002350">
    <property type="entry name" value="Kazal_dom"/>
</dbReference>
<dbReference type="InterPro" id="IPR036058">
    <property type="entry name" value="Kazal_dom_sf"/>
</dbReference>
<dbReference type="InterPro" id="IPR001239">
    <property type="entry name" value="Prot_inh_Kazal-m"/>
</dbReference>
<dbReference type="PANTHER" id="PTHR21312">
    <property type="entry name" value="SERINE PROTEASE INHIBITOR"/>
    <property type="match status" value="1"/>
</dbReference>
<dbReference type="PANTHER" id="PTHR21312:SF27">
    <property type="entry name" value="SERINE PROTEASE INHIBITOR KAZAL-TYPE 1"/>
    <property type="match status" value="1"/>
</dbReference>
<dbReference type="Pfam" id="PF00050">
    <property type="entry name" value="Kazal_1"/>
    <property type="match status" value="1"/>
</dbReference>
<dbReference type="PRINTS" id="PR00290">
    <property type="entry name" value="KAZALINHBTR"/>
</dbReference>
<dbReference type="SMART" id="SM00280">
    <property type="entry name" value="KAZAL"/>
    <property type="match status" value="1"/>
</dbReference>
<dbReference type="SUPFAM" id="SSF100895">
    <property type="entry name" value="Kazal-type serine protease inhibitors"/>
    <property type="match status" value="1"/>
</dbReference>
<dbReference type="PROSITE" id="PS00282">
    <property type="entry name" value="KAZAL_1"/>
    <property type="match status" value="1"/>
</dbReference>
<dbReference type="PROSITE" id="PS51465">
    <property type="entry name" value="KAZAL_2"/>
    <property type="match status" value="1"/>
</dbReference>
<organism>
    <name type="scientific">Homo sapiens</name>
    <name type="common">Human</name>
    <dbReference type="NCBI Taxonomy" id="9606"/>
    <lineage>
        <taxon>Eukaryota</taxon>
        <taxon>Metazoa</taxon>
        <taxon>Chordata</taxon>
        <taxon>Craniata</taxon>
        <taxon>Vertebrata</taxon>
        <taxon>Euteleostomi</taxon>
        <taxon>Mammalia</taxon>
        <taxon>Eutheria</taxon>
        <taxon>Euarchontoglires</taxon>
        <taxon>Primates</taxon>
        <taxon>Haplorrhini</taxon>
        <taxon>Catarrhini</taxon>
        <taxon>Hominidae</taxon>
        <taxon>Homo</taxon>
    </lineage>
</organism>
<name>ISK1_HUMAN</name>
<accession>P00995</accession>
<evidence type="ECO:0000250" key="1">
    <source>
        <dbReference type="UniProtKB" id="P09036"/>
    </source>
</evidence>
<evidence type="ECO:0000255" key="2">
    <source>
        <dbReference type="PROSITE-ProRule" id="PRU00798"/>
    </source>
</evidence>
<evidence type="ECO:0000269" key="3">
    <source>
    </source>
</evidence>
<evidence type="ECO:0000269" key="4">
    <source>
    </source>
</evidence>
<evidence type="ECO:0000269" key="5">
    <source>
    </source>
</evidence>
<evidence type="ECO:0000269" key="6">
    <source>
    </source>
</evidence>
<evidence type="ECO:0000269" key="7">
    <source>
    </source>
</evidence>
<evidence type="ECO:0000269" key="8">
    <source>
    </source>
</evidence>
<evidence type="ECO:0000269" key="9">
    <source>
    </source>
</evidence>
<evidence type="ECO:0000269" key="10">
    <source>
    </source>
</evidence>
<evidence type="ECO:0000269" key="11">
    <source>
    </source>
</evidence>
<evidence type="ECO:0000303" key="12">
    <source>
    </source>
</evidence>
<evidence type="ECO:0000305" key="13"/>
<evidence type="ECO:0000312" key="14">
    <source>
        <dbReference type="HGNC" id="HGNC:11244"/>
    </source>
</evidence>
<evidence type="ECO:0007829" key="15">
    <source>
        <dbReference type="PDB" id="1HPT"/>
    </source>
</evidence>
<evidence type="ECO:0007829" key="16">
    <source>
        <dbReference type="PDB" id="7QE9"/>
    </source>
</evidence>
<feature type="signal peptide" evidence="10 11">
    <location>
        <begin position="1"/>
        <end position="23"/>
    </location>
</feature>
<feature type="chain" id="PRO_0000016557" description="Serine protease inhibitor Kazal-type 1">
    <location>
        <begin position="24"/>
        <end position="79"/>
    </location>
</feature>
<feature type="domain" description="Kazal-like" evidence="2">
    <location>
        <begin position="26"/>
        <end position="79"/>
    </location>
</feature>
<feature type="site" description="Reactive bond for trypsin" evidence="1 2">
    <location>
        <begin position="41"/>
        <end position="42"/>
    </location>
</feature>
<feature type="site" description="Necessary for sperm binding" evidence="1">
    <location>
        <begin position="43"/>
        <end position="44"/>
    </location>
</feature>
<feature type="disulfide bond">
    <location>
        <begin position="32"/>
        <end position="61"/>
    </location>
</feature>
<feature type="disulfide bond">
    <location>
        <begin position="39"/>
        <end position="58"/>
    </location>
</feature>
<feature type="disulfide bond">
    <location>
        <begin position="47"/>
        <end position="79"/>
    </location>
</feature>
<feature type="sequence variant" id="VAR_032011" description="In PCTT; benign; dbSNP:rs35877720." evidence="7">
    <original>L</original>
    <variation>F</variation>
    <location>
        <position position="12"/>
    </location>
</feature>
<feature type="sequence variant" id="VAR_011688" description="In PCTT; dbSNP:rs104893939." evidence="4">
    <original>L</original>
    <variation>P</variation>
    <location>
        <position position="14"/>
    </location>
</feature>
<feature type="sequence variant" id="VAR_011689" description="In PCTT and TCP; associated with disease susceptibility; risk factor also for acute pancreatitis; may confer susceptibility to fibrocalculous pancreatic diabetes; dbSNP:rs17107315." evidence="3 4 5 6">
    <original>N</original>
    <variation>S</variation>
    <location>
        <position position="34"/>
    </location>
</feature>
<feature type="sequence variant" id="VAR_011690" description="In dbSNP:rs111966833." evidence="3 4 5 8">
    <original>P</original>
    <variation>S</variation>
    <location>
        <position position="55"/>
    </location>
</feature>
<feature type="sequence variant" id="VAR_032012" description="In dbSNP:rs35523678.">
    <original>R</original>
    <variation>H</variation>
    <location>
        <position position="67"/>
    </location>
</feature>
<feature type="sequence conflict" description="In Ref. 6; AA sequence and 7; AA sequence." evidence="13" ref="6 7">
    <original>D</original>
    <variation>N</variation>
    <location>
        <position position="44"/>
    </location>
</feature>
<feature type="sequence conflict" description="In Ref. 6; AA sequence." evidence="13" ref="6">
    <original>N</original>
    <variation>D</variation>
    <location>
        <position position="52"/>
    </location>
</feature>
<feature type="sequence conflict" description="In Ref. 3; CAA68697." evidence="13" ref="3">
    <original>N</original>
    <variation>G</variation>
    <location>
        <position position="64"/>
    </location>
</feature>
<feature type="strand" evidence="15">
    <location>
        <begin position="26"/>
        <end position="28"/>
    </location>
</feature>
<feature type="strand" evidence="16">
    <location>
        <begin position="36"/>
        <end position="40"/>
    </location>
</feature>
<feature type="strand" evidence="16">
    <location>
        <begin position="46"/>
        <end position="48"/>
    </location>
</feature>
<feature type="strand" evidence="16">
    <location>
        <begin position="53"/>
        <end position="56"/>
    </location>
</feature>
<feature type="helix" evidence="16">
    <location>
        <begin position="57"/>
        <end position="66"/>
    </location>
</feature>
<feature type="strand" evidence="16">
    <location>
        <begin position="73"/>
        <end position="77"/>
    </location>
</feature>
<reference key="1">
    <citation type="journal article" date="1987" name="Biochem. Biophys. Res. Commun.">
        <title>Primary structure of human pancreatic secretory trypsin inhibitor (PSTI) gene.</title>
        <authorList>
            <person name="Horii A."/>
            <person name="Kobayashi T."/>
            <person name="Tomita N."/>
            <person name="Yamamoto T."/>
            <person name="Fukushige S."/>
            <person name="Murotsu T."/>
            <person name="Ogawa M."/>
            <person name="Mori T."/>
            <person name="Matsubara K."/>
        </authorList>
    </citation>
    <scope>NUCLEOTIDE SEQUENCE [GENOMIC DNA]</scope>
</reference>
<reference key="2">
    <citation type="journal article" date="1985" name="Biochem. Biophys. Res. Commun.">
        <title>Molecular cloning and nucleotide sequence of human pancreatic secretory trypsin inhibitor (PSTI) cDNA.</title>
        <authorList>
            <person name="Yamamoto T."/>
            <person name="Nakamura Y."/>
            <person name="Nishide T."/>
            <person name="Emi M."/>
            <person name="Ogawa M."/>
            <person name="Mori T."/>
            <person name="Matsubara K."/>
        </authorList>
    </citation>
    <scope>NUCLEOTIDE SEQUENCE [MRNA]</scope>
</reference>
<reference key="3">
    <citation type="journal article" date="1987" name="FEBS Lett.">
        <title>Expression of pancreatic secretory trypsin inhibitor gene in neoplastic tissues.</title>
        <authorList>
            <person name="Tomita N."/>
            <person name="Horii A."/>
            <person name="Yamamoto T."/>
            <person name="Ogawa M."/>
            <person name="Mori T."/>
            <person name="Matsubara K."/>
        </authorList>
    </citation>
    <scope>NUCLEOTIDE SEQUENCE [MRNA]</scope>
</reference>
<reference key="4">
    <citation type="journal article" date="2000" name="Nat. Genet.">
        <title>Mutations in the gene encoding the serine protease inhibitor, Kazal type 1 are associated with chronic pancreatitis.</title>
        <authorList>
            <person name="Witt H."/>
            <person name="Luck W."/>
            <person name="Hennies H.C."/>
            <person name="Classen M."/>
            <person name="Kage A."/>
            <person name="Lass U."/>
            <person name="Landt O."/>
            <person name="Becker M."/>
        </authorList>
    </citation>
    <scope>NUCLEOTIDE SEQUENCE [GENOMIC DNA]</scope>
    <scope>VARIANTS PCTT PRO-14 AND SER-34</scope>
    <scope>VARIANT SER-55</scope>
</reference>
<reference key="5">
    <citation type="journal article" date="2004" name="Genome Res.">
        <title>The status, quality, and expansion of the NIH full-length cDNA project: the Mammalian Gene Collection (MGC).</title>
        <authorList>
            <consortium name="The MGC Project Team"/>
        </authorList>
    </citation>
    <scope>NUCLEOTIDE SEQUENCE [LARGE SCALE MRNA]</scope>
    <source>
        <tissue>Pancreas</tissue>
        <tissue>Spleen</tissue>
    </source>
</reference>
<reference key="6">
    <citation type="journal article" date="1977" name="Arch. Biochem. Biophys.">
        <title>The primary structure of the human pancreatic secretory trypsin inhibitor. Amino acid sequence of the reduced S-aminoethylated protein.</title>
        <authorList>
            <person name="Bartelt D.C."/>
            <person name="Shapanka R."/>
            <person name="Greene L.J."/>
        </authorList>
    </citation>
    <scope>PROTEIN SEQUENCE OF 24-79</scope>
</reference>
<reference key="7">
    <citation type="journal article" date="1982" name="J. Biol. Chem.">
        <title>Purification and characterization of a tumor-associated trypsin inhibitor from the urine of a patient with ovarian cancer.</title>
        <authorList>
            <person name="Huhtala M.-L."/>
            <person name="Pesonen K."/>
            <person name="Kalkkinen N."/>
            <person name="Stenman U.-H."/>
        </authorList>
    </citation>
    <scope>PROTEIN SEQUENCE OF 24-46</scope>
    <scope>FUNCTION</scope>
    <scope>SUBCELLULAR LOCATION</scope>
</reference>
<reference key="8">
    <citation type="journal article" date="1992" name="J. Mol. Biol.">
        <title>Three-dimensional structure of a recombinant variant of human pancreatic secretory trypsin inhibitor (Kazal type).</title>
        <authorList>
            <person name="Hecht H.-J."/>
            <person name="Szardenings M."/>
            <person name="Collins J."/>
            <person name="Schomburg D."/>
        </authorList>
    </citation>
    <scope>X-RAY CRYSTALLOGRAPHY (2.3 ANGSTROMS)</scope>
</reference>
<reference key="9">
    <citation type="journal article" date="1993" name="J. Mol. Biol.">
        <title>Solution structure of a variant of human pancreatic secretory trypsin inhibitor determined by nuclear magnetic resonance spectroscopy.</title>
        <authorList>
            <person name="Klaus W."/>
            <person name="Schomburg D."/>
        </authorList>
    </citation>
    <scope>STRUCTURE BY NMR OF MUTANT LEU-41/ARG-44</scope>
</reference>
<reference key="10">
    <citation type="journal article" date="2000" name="J. Med. Genet.">
        <title>Mutational analysis of the human pancreatic secretory trypsin inhibitor (PSTI) gene in hereditary and sporadic chronic pancreatitis.</title>
        <authorList>
            <person name="Chen J.-M."/>
            <person name="Mercier B."/>
            <person name="Audrezet M.-P."/>
            <person name="Ferec C."/>
        </authorList>
    </citation>
    <scope>VARIANT PCTT SER-34</scope>
    <scope>VARIANT SER-55</scope>
</reference>
<reference key="11">
    <citation type="journal article" date="2002" name="Am. J. Hum. Genet.">
        <title>SPINK1 is a susceptibility gene for fibrocalculous pancreatic diabetes in subjects from the Indian subcontinent.</title>
        <authorList>
            <person name="Hassan Z."/>
            <person name="Mohan V."/>
            <person name="Ali L."/>
            <person name="Allotey R."/>
            <person name="Barakat K."/>
            <person name="Faruque M.O."/>
            <person name="Deepa R."/>
            <person name="McDermott M.F."/>
            <person name="Jackson A.E."/>
            <person name="Cassell P."/>
            <person name="Curtis D."/>
            <person name="Gelding S.V."/>
            <person name="Vijayaravaghan S."/>
            <person name="Gyr N."/>
            <person name="Whitcomb D.C."/>
            <person name="Azad Khan A.K."/>
            <person name="Hitman G.A."/>
        </authorList>
    </citation>
    <scope>VARIANT TCP SER-34</scope>
    <scope>INVOLVEMENT IN FIBROCALCULOUS PANCREATIC DIABETES</scope>
</reference>
<reference key="12">
    <citation type="journal article" date="2002" name="J. Med. Genet.">
        <title>Mutations in the pancreatic secretory trypsin inhibitor gene (PSTI/SPINK1) rather than the cationic trypsinogen gene (PRSS1) are significantly associated with tropical calcific pancreatitis.</title>
        <authorList>
            <person name="Chandak G.R."/>
            <person name="Idris M.M."/>
            <person name="Reddy D.N."/>
            <person name="Bhaskar S."/>
            <person name="Sriram P.V.J."/>
            <person name="Singh L."/>
        </authorList>
    </citation>
    <scope>VARIANT TCP SER-34</scope>
    <scope>VARIANT SER-55</scope>
</reference>
<reference key="13">
    <citation type="journal article" date="2003" name="Hum. Genet.">
        <title>Gene symbol: Spink1-Omim 167790. Disease: hereditary pancreatitis.</title>
        <authorList>
            <person name="Deybach J.-C.D."/>
            <person name="Phung L."/>
            <person name="Lamoril J."/>
            <person name="Bouizegarene P."/>
            <person name="Levy P."/>
            <person name="Deybach J.-C."/>
            <person name="Ruszniewski P."/>
        </authorList>
    </citation>
    <scope>VARIANT PCTT PHE-12</scope>
</reference>
<reference key="14">
    <citation type="journal article" date="2008" name="Eur. J. Gastroenterol. Hepatol.">
        <title>The SPINK1 N34S variant is associated with acute pancreatitis.</title>
        <authorList>
            <person name="O'Reilly D.A."/>
            <person name="Witt H."/>
            <person name="Rahman S.H."/>
            <person name="Schulz H.U."/>
            <person name="Sargen K."/>
            <person name="Kage A."/>
            <person name="Cartmell M.T."/>
            <person name="Landt O."/>
            <person name="Larvin M."/>
            <person name="Demaine A.G."/>
            <person name="McMahon M.J."/>
            <person name="Becker M."/>
            <person name="Kingsnorth A.N."/>
        </authorList>
    </citation>
    <scope>VARIANT PCTT SER-34</scope>
    <scope>VARIANT SER-55</scope>
</reference>
<reference key="15">
    <citation type="journal article" date="2010" name="Am. J. Gastroenterol.">
        <title>SPINK1 N34S is strongly associated with recurrent acute pancreatitis but is not a risk factor for the first or sentinel acute pancreatitis event.</title>
        <authorList>
            <person name="Aoun E."/>
            <person name="Muddana V."/>
            <person name="Papachristou G.I."/>
            <person name="Whitcomb D.C."/>
        </authorList>
    </citation>
    <scope>VARIANT PCTT SER-34</scope>
</reference>
<keyword id="KW-0002">3D-structure</keyword>
<keyword id="KW-0903">Direct protein sequencing</keyword>
<keyword id="KW-0225">Disease variant</keyword>
<keyword id="KW-1015">Disulfide bond</keyword>
<keyword id="KW-0646">Protease inhibitor</keyword>
<keyword id="KW-1267">Proteomics identification</keyword>
<keyword id="KW-1185">Reference proteome</keyword>
<keyword id="KW-0964">Secreted</keyword>
<keyword id="KW-0722">Serine protease inhibitor</keyword>
<keyword id="KW-0732">Signal</keyword>
<proteinExistence type="evidence at protein level"/>
<comment type="function">
    <text evidence="1 10">Serine protease inhibitor which exhibits anti-trypsin activity (PubMed:7142173). In the pancreas, protects against trypsin-catalyzed premature activation of zymogens (By similarity).</text>
</comment>
<comment type="function">
    <text evidence="1">In the male reproductive tract, binds to sperm heads where it modulates sperm capacitance by inhibiting calcium uptake and nitrogen oxide (NO) production.</text>
</comment>
<comment type="interaction">
    <interactant intactId="EBI-8054204">
        <id>P00995</id>
    </interactant>
    <interactant intactId="EBI-12092171">
        <id>Q12797-6</id>
        <label>ASPH</label>
    </interactant>
    <organismsDiffer>false</organismsDiffer>
    <experiments>3</experiments>
</comment>
<comment type="subcellular location">
    <subcellularLocation>
        <location evidence="10">Secreted</location>
    </subcellularLocation>
</comment>
<comment type="disease" evidence="3 4 7 8 9">
    <disease id="DI-01731">
        <name>Pancreatitis, hereditary</name>
        <acronym>PCTT</acronym>
        <description>A disease characterized by pancreas inflammation, permanent destruction of the pancreatic parenchyma, maldigestion, and severe abdominal pain attacks.</description>
        <dbReference type="MIM" id="167800"/>
    </disease>
    <text>Disease susceptibility is associated with variants affecting the gene represented in this entry.</text>
</comment>
<comment type="disease" evidence="5 6">
    <disease id="DI-02394">
        <name>Tropical calcific pancreatitis</name>
        <acronym>TCP</acronym>
        <description>Idiopathic, juvenile, nonalcoholic form of chronic pancreatitis widely prevalent in several tropical countries. It can be associated with fibrocalculous pancreatic diabetes (FCPD) depending on both environmental and genetic factors. TCP differs from alcoholic pancreatitis by a much younger age of onset, pancreatic calcification, a high incidence of insulin dependent but ketosis resistant diabetes mellitus, and an exceptionally high incidence of pancreatic cancer.</description>
        <dbReference type="MIM" id="608189"/>
    </disease>
    <text>Disease susceptibility is associated with variants affecting the gene represented in this entry.</text>
</comment>
<gene>
    <name type="primary">SPINK1</name>
    <name type="synonym">PSTI</name>
</gene>